<accession>Q7F0Q2</accession>
<accession>A0A0P0X626</accession>
<name>PPRD2_ORYSJ</name>
<sequence>MESEGWPALQPLLCFAWIAATLPIIAAALPIPTAVGGHLLRRLLSAFSSRGKTVRPSPASSSGSSSSKAKFTVPQKYFMHFYVVGVLATTILLLAIWFYAYMKLTPLLLESSSYSTIFSHLVGSNSFSFGRVRSRTMGHKYRVWRTVFALLLMEVQVLRRLYETEHVFHYSPARMHIVGYLTGLFYYVAAPLSLASSCIPEAAEYFQGQVPEFVVKGRARMPDLVIDSSSLLQPLLKLGWTQWIGAVIFIWGSLHQIRCHAILGSLREHKDYDEYVIPCGDCFNRVSCPHYLAELVIYFGMLVASGAEDIPVWFLFIFVITNLSFAAVETYNWYLQKFEDYPRSRYAIIPFVC</sequence>
<gene>
    <name type="ordered locus">Os07g0493400</name>
    <name type="ordered locus">LOC_Os07g31140</name>
    <name type="ORF">OsJ_24314</name>
    <name type="ORF">P0038F10.126</name>
</gene>
<comment type="function">
    <text evidence="1 2">Plays a key role in early steps of protein N-linked glycosylation by being involved in the conversion of polyprenol into dolichol (By similarity). Acts as a polyprenal reductase that mediates the reduction of polyprenal into dolichal in a NADP-dependent mechanism (By similarity). Dolichols are required for the synthesis of dolichol-linked monosaccharides and the oligosaccharide precursor used for N-glycosylation (By similarity).</text>
</comment>
<comment type="catalytic activity">
    <reaction evidence="2">
        <text>a di-trans,poly-cis-dolichal + NADP(+) = a di-trans,poly-cis-polyprenal + NADPH + H(+)</text>
        <dbReference type="Rhea" id="RHEA:80727"/>
        <dbReference type="Rhea" id="RHEA-COMP:19536"/>
        <dbReference type="Rhea" id="RHEA-COMP:19537"/>
        <dbReference type="ChEBI" id="CHEBI:15378"/>
        <dbReference type="ChEBI" id="CHEBI:57783"/>
        <dbReference type="ChEBI" id="CHEBI:58349"/>
        <dbReference type="ChEBI" id="CHEBI:231623"/>
        <dbReference type="ChEBI" id="CHEBI:231637"/>
        <dbReference type="EC" id="1.3.1.94"/>
    </reaction>
    <physiologicalReaction direction="right-to-left" evidence="2">
        <dbReference type="Rhea" id="RHEA:80729"/>
    </physiologicalReaction>
</comment>
<comment type="pathway">
    <text evidence="1">Protein modification; protein glycosylation.</text>
</comment>
<comment type="subcellular location">
    <subcellularLocation>
        <location evidence="1">Cell membrane</location>
        <topology evidence="3">Multi-pass membrane protein</topology>
    </subcellularLocation>
</comment>
<comment type="similarity">
    <text evidence="4">Belongs to the steroid 5-alpha reductase family. Polyprenal reductase subfamily.</text>
</comment>
<reference key="1">
    <citation type="journal article" date="2005" name="Nature">
        <title>The map-based sequence of the rice genome.</title>
        <authorList>
            <consortium name="International rice genome sequencing project (IRGSP)"/>
        </authorList>
    </citation>
    <scope>NUCLEOTIDE SEQUENCE [LARGE SCALE GENOMIC DNA]</scope>
    <source>
        <strain>cv. Nipponbare</strain>
    </source>
</reference>
<reference key="2">
    <citation type="journal article" date="2013" name="Rice">
        <title>Improvement of the Oryza sativa Nipponbare reference genome using next generation sequence and optical map data.</title>
        <authorList>
            <person name="Kawahara Y."/>
            <person name="de la Bastide M."/>
            <person name="Hamilton J.P."/>
            <person name="Kanamori H."/>
            <person name="McCombie W.R."/>
            <person name="Ouyang S."/>
            <person name="Schwartz D.C."/>
            <person name="Tanaka T."/>
            <person name="Wu J."/>
            <person name="Zhou S."/>
            <person name="Childs K.L."/>
            <person name="Davidson R.M."/>
            <person name="Lin H."/>
            <person name="Quesada-Ocampo L."/>
            <person name="Vaillancourt B."/>
            <person name="Sakai H."/>
            <person name="Lee S.S."/>
            <person name="Kim J."/>
            <person name="Numa H."/>
            <person name="Itoh T."/>
            <person name="Buell C.R."/>
            <person name="Matsumoto T."/>
        </authorList>
    </citation>
    <scope>GENOME REANNOTATION</scope>
    <source>
        <strain>cv. Nipponbare</strain>
    </source>
</reference>
<reference key="3">
    <citation type="journal article" date="2005" name="PLoS Biol.">
        <title>The genomes of Oryza sativa: a history of duplications.</title>
        <authorList>
            <person name="Yu J."/>
            <person name="Wang J."/>
            <person name="Lin W."/>
            <person name="Li S."/>
            <person name="Li H."/>
            <person name="Zhou J."/>
            <person name="Ni P."/>
            <person name="Dong W."/>
            <person name="Hu S."/>
            <person name="Zeng C."/>
            <person name="Zhang J."/>
            <person name="Zhang Y."/>
            <person name="Li R."/>
            <person name="Xu Z."/>
            <person name="Li S."/>
            <person name="Li X."/>
            <person name="Zheng H."/>
            <person name="Cong L."/>
            <person name="Lin L."/>
            <person name="Yin J."/>
            <person name="Geng J."/>
            <person name="Li G."/>
            <person name="Shi J."/>
            <person name="Liu J."/>
            <person name="Lv H."/>
            <person name="Li J."/>
            <person name="Wang J."/>
            <person name="Deng Y."/>
            <person name="Ran L."/>
            <person name="Shi X."/>
            <person name="Wang X."/>
            <person name="Wu Q."/>
            <person name="Li C."/>
            <person name="Ren X."/>
            <person name="Wang J."/>
            <person name="Wang X."/>
            <person name="Li D."/>
            <person name="Liu D."/>
            <person name="Zhang X."/>
            <person name="Ji Z."/>
            <person name="Zhao W."/>
            <person name="Sun Y."/>
            <person name="Zhang Z."/>
            <person name="Bao J."/>
            <person name="Han Y."/>
            <person name="Dong L."/>
            <person name="Ji J."/>
            <person name="Chen P."/>
            <person name="Wu S."/>
            <person name="Liu J."/>
            <person name="Xiao Y."/>
            <person name="Bu D."/>
            <person name="Tan J."/>
            <person name="Yang L."/>
            <person name="Ye C."/>
            <person name="Zhang J."/>
            <person name="Xu J."/>
            <person name="Zhou Y."/>
            <person name="Yu Y."/>
            <person name="Zhang B."/>
            <person name="Zhuang S."/>
            <person name="Wei H."/>
            <person name="Liu B."/>
            <person name="Lei M."/>
            <person name="Yu H."/>
            <person name="Li Y."/>
            <person name="Xu H."/>
            <person name="Wei S."/>
            <person name="He X."/>
            <person name="Fang L."/>
            <person name="Zhang Z."/>
            <person name="Zhang Y."/>
            <person name="Huang X."/>
            <person name="Su Z."/>
            <person name="Tong W."/>
            <person name="Li J."/>
            <person name="Tong Z."/>
            <person name="Li S."/>
            <person name="Ye J."/>
            <person name="Wang L."/>
            <person name="Fang L."/>
            <person name="Lei T."/>
            <person name="Chen C.-S."/>
            <person name="Chen H.-C."/>
            <person name="Xu Z."/>
            <person name="Li H."/>
            <person name="Huang H."/>
            <person name="Zhang F."/>
            <person name="Xu H."/>
            <person name="Li N."/>
            <person name="Zhao C."/>
            <person name="Li S."/>
            <person name="Dong L."/>
            <person name="Huang Y."/>
            <person name="Li L."/>
            <person name="Xi Y."/>
            <person name="Qi Q."/>
            <person name="Li W."/>
            <person name="Zhang B."/>
            <person name="Hu W."/>
            <person name="Zhang Y."/>
            <person name="Tian X."/>
            <person name="Jiao Y."/>
            <person name="Liang X."/>
            <person name="Jin J."/>
            <person name="Gao L."/>
            <person name="Zheng W."/>
            <person name="Hao B."/>
            <person name="Liu S.-M."/>
            <person name="Wang W."/>
            <person name="Yuan L."/>
            <person name="Cao M."/>
            <person name="McDermott J."/>
            <person name="Samudrala R."/>
            <person name="Wang J."/>
            <person name="Wong G.K.-S."/>
            <person name="Yang H."/>
        </authorList>
    </citation>
    <scope>NUCLEOTIDE SEQUENCE [LARGE SCALE GENOMIC DNA]</scope>
    <source>
        <strain>cv. Nipponbare</strain>
    </source>
</reference>
<reference key="4">
    <citation type="submission" date="2006-10" db="EMBL/GenBank/DDBJ databases">
        <title>Oryza sativa full length cDNA.</title>
        <authorList>
            <consortium name="The rice full-length cDNA consortium"/>
        </authorList>
    </citation>
    <scope>NUCLEOTIDE SEQUENCE [LARGE SCALE MRNA]</scope>
    <source>
        <strain>cv. Nipponbare</strain>
        <tissue>Callus</tissue>
    </source>
</reference>
<dbReference type="EC" id="1.3.1.94" evidence="2"/>
<dbReference type="EMBL" id="AP004266">
    <property type="protein sequence ID" value="BAC83358.1"/>
    <property type="molecule type" value="Genomic_DNA"/>
</dbReference>
<dbReference type="EMBL" id="AP014963">
    <property type="protein sequence ID" value="BAT01576.1"/>
    <property type="molecule type" value="Genomic_DNA"/>
</dbReference>
<dbReference type="EMBL" id="CM000144">
    <property type="protein sequence ID" value="EAZ39875.1"/>
    <property type="molecule type" value="Genomic_DNA"/>
</dbReference>
<dbReference type="EMBL" id="AK241048">
    <property type="protein sequence ID" value="BAH00939.1"/>
    <property type="molecule type" value="mRNA"/>
</dbReference>
<dbReference type="RefSeq" id="XP_015646164.1">
    <property type="nucleotide sequence ID" value="XM_015790678.1"/>
</dbReference>
<dbReference type="SMR" id="Q7F0Q2"/>
<dbReference type="FunCoup" id="Q7F0Q2">
    <property type="interactions" value="1379"/>
</dbReference>
<dbReference type="STRING" id="39947.Q7F0Q2"/>
<dbReference type="PaxDb" id="39947-Q7F0Q2"/>
<dbReference type="EnsemblPlants" id="Os07t0493400-01">
    <property type="protein sequence ID" value="Os07t0493400-01"/>
    <property type="gene ID" value="Os07g0493400"/>
</dbReference>
<dbReference type="Gramene" id="Os07t0493400-01">
    <property type="protein sequence ID" value="Os07t0493400-01"/>
    <property type="gene ID" value="Os07g0493400"/>
</dbReference>
<dbReference type="eggNOG" id="KOG1640">
    <property type="taxonomic scope" value="Eukaryota"/>
</dbReference>
<dbReference type="HOGENOM" id="CLU_044409_1_0_1"/>
<dbReference type="InParanoid" id="Q7F0Q2"/>
<dbReference type="OMA" id="HFLFEIC"/>
<dbReference type="OrthoDB" id="541710at2759"/>
<dbReference type="PlantReactome" id="R-OSA-1119456">
    <property type="pathway name" value="Brassinosteroid biosynthesis II"/>
</dbReference>
<dbReference type="UniPathway" id="UPA00378"/>
<dbReference type="Proteomes" id="UP000000763">
    <property type="component" value="Chromosome 7"/>
</dbReference>
<dbReference type="Proteomes" id="UP000007752">
    <property type="component" value="Chromosome 7"/>
</dbReference>
<dbReference type="Proteomes" id="UP000059680">
    <property type="component" value="Chromosome 7"/>
</dbReference>
<dbReference type="GO" id="GO:0005783">
    <property type="term" value="C:endoplasmic reticulum"/>
    <property type="evidence" value="ECO:0000318"/>
    <property type="project" value="GO_Central"/>
</dbReference>
<dbReference type="GO" id="GO:0005886">
    <property type="term" value="C:plasma membrane"/>
    <property type="evidence" value="ECO:0007669"/>
    <property type="project" value="UniProtKB-SubCell"/>
</dbReference>
<dbReference type="GO" id="GO:0160198">
    <property type="term" value="F:polyprenal reductase activity"/>
    <property type="evidence" value="ECO:0000250"/>
    <property type="project" value="UniProtKB"/>
</dbReference>
<dbReference type="GO" id="GO:0102389">
    <property type="term" value="F:polyprenol reductase activity"/>
    <property type="evidence" value="ECO:0000318"/>
    <property type="project" value="GO_Central"/>
</dbReference>
<dbReference type="GO" id="GO:0019408">
    <property type="term" value="P:dolichol biosynthetic process"/>
    <property type="evidence" value="ECO:0000250"/>
    <property type="project" value="UniProtKB"/>
</dbReference>
<dbReference type="GO" id="GO:0006488">
    <property type="term" value="P:dolichol-linked oligosaccharide biosynthetic process"/>
    <property type="evidence" value="ECO:0000318"/>
    <property type="project" value="GO_Central"/>
</dbReference>
<dbReference type="InterPro" id="IPR001104">
    <property type="entry name" value="3-oxo-5_a-steroid_4-DH_C"/>
</dbReference>
<dbReference type="InterPro" id="IPR039698">
    <property type="entry name" value="Dfg10/SRD5A3"/>
</dbReference>
<dbReference type="PANTHER" id="PTHR14624">
    <property type="entry name" value="DFG10 PROTEIN"/>
    <property type="match status" value="1"/>
</dbReference>
<dbReference type="PANTHER" id="PTHR14624:SF0">
    <property type="entry name" value="POLYPRENOL REDUCTASE"/>
    <property type="match status" value="1"/>
</dbReference>
<dbReference type="Pfam" id="PF02544">
    <property type="entry name" value="Steroid_dh"/>
    <property type="match status" value="1"/>
</dbReference>
<dbReference type="PROSITE" id="PS50244">
    <property type="entry name" value="S5A_REDUCTASE"/>
    <property type="match status" value="1"/>
</dbReference>
<proteinExistence type="evidence at transcript level"/>
<keyword id="KW-1003">Cell membrane</keyword>
<keyword id="KW-0472">Membrane</keyword>
<keyword id="KW-0521">NADP</keyword>
<keyword id="KW-0560">Oxidoreductase</keyword>
<keyword id="KW-1185">Reference proteome</keyword>
<keyword id="KW-0812">Transmembrane</keyword>
<keyword id="KW-1133">Transmembrane helix</keyword>
<organism>
    <name type="scientific">Oryza sativa subsp. japonica</name>
    <name type="common">Rice</name>
    <dbReference type="NCBI Taxonomy" id="39947"/>
    <lineage>
        <taxon>Eukaryota</taxon>
        <taxon>Viridiplantae</taxon>
        <taxon>Streptophyta</taxon>
        <taxon>Embryophyta</taxon>
        <taxon>Tracheophyta</taxon>
        <taxon>Spermatophyta</taxon>
        <taxon>Magnoliopsida</taxon>
        <taxon>Liliopsida</taxon>
        <taxon>Poales</taxon>
        <taxon>Poaceae</taxon>
        <taxon>BOP clade</taxon>
        <taxon>Oryzoideae</taxon>
        <taxon>Oryzeae</taxon>
        <taxon>Oryzinae</taxon>
        <taxon>Oryza</taxon>
        <taxon>Oryza sativa</taxon>
    </lineage>
</organism>
<protein>
    <recommendedName>
        <fullName evidence="4">Polyprenal reductase 2</fullName>
        <ecNumber evidence="2">1.3.1.94</ecNumber>
    </recommendedName>
</protein>
<evidence type="ECO:0000250" key="1">
    <source>
        <dbReference type="UniProtKB" id="Q9CAH5"/>
    </source>
</evidence>
<evidence type="ECO:0000250" key="2">
    <source>
        <dbReference type="UniProtKB" id="Q9H8P0"/>
    </source>
</evidence>
<evidence type="ECO:0000255" key="3"/>
<evidence type="ECO:0000305" key="4"/>
<feature type="chain" id="PRO_0000398659" description="Polyprenal reductase 2">
    <location>
        <begin position="1"/>
        <end position="353"/>
    </location>
</feature>
<feature type="transmembrane region" description="Helical" evidence="3">
    <location>
        <begin position="11"/>
        <end position="31"/>
    </location>
</feature>
<feature type="transmembrane region" description="Helical" evidence="3">
    <location>
        <begin position="78"/>
        <end position="98"/>
    </location>
</feature>
<feature type="transmembrane region" description="Helical" evidence="3">
    <location>
        <begin position="175"/>
        <end position="195"/>
    </location>
</feature>
<feature type="transmembrane region" description="Helical" evidence="3">
    <location>
        <begin position="234"/>
        <end position="254"/>
    </location>
</feature>
<feature type="transmembrane region" description="Helical" evidence="3">
    <location>
        <begin position="291"/>
        <end position="308"/>
    </location>
</feature>
<feature type="transmembrane region" description="Helical" evidence="3">
    <location>
        <begin position="313"/>
        <end position="335"/>
    </location>
</feature>